<sequence length="26" mass="3061">MLQMRATLAFLGQTLTYNTSCQRRQK</sequence>
<feature type="chain" id="PRO_0000299717" description="Putative uncharacterized protein YOR161W-A">
    <location>
        <begin position="1"/>
        <end position="26"/>
    </location>
</feature>
<accession>Q8TGL5</accession>
<comment type="miscellaneous">
    <text evidence="1">Completely overlaps PNS1.</text>
</comment>
<comment type="caution">
    <text evidence="2">Product of a dubious gene prediction unlikely to encode a functional protein. Because of that it is not part of the S.cerevisiae S288c complete/reference proteome set.</text>
</comment>
<gene>
    <name type="ordered locus">YOR161W-A</name>
</gene>
<organism>
    <name type="scientific">Saccharomyces cerevisiae (strain ATCC 204508 / S288c)</name>
    <name type="common">Baker's yeast</name>
    <dbReference type="NCBI Taxonomy" id="559292"/>
    <lineage>
        <taxon>Eukaryota</taxon>
        <taxon>Fungi</taxon>
        <taxon>Dikarya</taxon>
        <taxon>Ascomycota</taxon>
        <taxon>Saccharomycotina</taxon>
        <taxon>Saccharomycetes</taxon>
        <taxon>Saccharomycetales</taxon>
        <taxon>Saccharomycetaceae</taxon>
        <taxon>Saccharomyces</taxon>
    </lineage>
</organism>
<protein>
    <recommendedName>
        <fullName>Putative uncharacterized protein YOR161W-A</fullName>
    </recommendedName>
</protein>
<dbReference type="EMBL" id="U55021">
    <property type="status" value="NOT_ANNOTATED_CDS"/>
    <property type="molecule type" value="Genomic_DNA"/>
</dbReference>
<dbReference type="EMBL" id="Z75069">
    <property type="status" value="NOT_ANNOTATED_CDS"/>
    <property type="molecule type" value="Genomic_DNA"/>
</dbReference>
<dbReference type="EMBL" id="AF479977">
    <property type="protein sequence ID" value="AAL79290.1"/>
    <property type="molecule type" value="Genomic_DNA"/>
</dbReference>
<dbReference type="STRING" id="4932.YOR161W-A"/>
<dbReference type="PaxDb" id="4932-YOR161W-A"/>
<dbReference type="EnsemblFungi" id="YOR161W-A_mRNA">
    <property type="protein sequence ID" value="YOR161W-A"/>
    <property type="gene ID" value="YOR161W-A"/>
</dbReference>
<dbReference type="AGR" id="SGD:S000028713"/>
<dbReference type="SGD" id="S000028713">
    <property type="gene designation" value="YOR161W-A"/>
</dbReference>
<dbReference type="HOGENOM" id="CLU_3417332_0_0_1"/>
<reference key="1">
    <citation type="journal article" date="1996" name="Yeast">
        <title>Analysis of a 22,956 bp region on the right arm of Saccharomyces cerevisiae chromosome XV.</title>
        <authorList>
            <person name="Madania A."/>
            <person name="Poch O."/>
            <person name="Tarassov I.A."/>
            <person name="Winsor B."/>
            <person name="Martin R.P."/>
        </authorList>
    </citation>
    <scope>NUCLEOTIDE SEQUENCE [GENOMIC DNA]</scope>
    <source>
        <strain>S288c / FY1678</strain>
    </source>
</reference>
<reference key="2">
    <citation type="journal article" date="1997" name="Nature">
        <title>The nucleotide sequence of Saccharomyces cerevisiae chromosome XV.</title>
        <authorList>
            <person name="Dujon B."/>
            <person name="Albermann K."/>
            <person name="Aldea M."/>
            <person name="Alexandraki D."/>
            <person name="Ansorge W."/>
            <person name="Arino J."/>
            <person name="Benes V."/>
            <person name="Bohn C."/>
            <person name="Bolotin-Fukuhara M."/>
            <person name="Bordonne R."/>
            <person name="Boyer J."/>
            <person name="Camasses A."/>
            <person name="Casamayor A."/>
            <person name="Casas C."/>
            <person name="Cheret G."/>
            <person name="Cziepluch C."/>
            <person name="Daignan-Fornier B."/>
            <person name="Dang V.-D."/>
            <person name="de Haan M."/>
            <person name="Delius H."/>
            <person name="Durand P."/>
            <person name="Fairhead C."/>
            <person name="Feldmann H."/>
            <person name="Gaillon L."/>
            <person name="Galisson F."/>
            <person name="Gamo F.-J."/>
            <person name="Gancedo C."/>
            <person name="Goffeau A."/>
            <person name="Goulding S.E."/>
            <person name="Grivell L.A."/>
            <person name="Habbig B."/>
            <person name="Hand N.J."/>
            <person name="Hani J."/>
            <person name="Hattenhorst U."/>
            <person name="Hebling U."/>
            <person name="Hernando Y."/>
            <person name="Herrero E."/>
            <person name="Heumann K."/>
            <person name="Hiesel R."/>
            <person name="Hilger F."/>
            <person name="Hofmann B."/>
            <person name="Hollenberg C.P."/>
            <person name="Hughes B."/>
            <person name="Jauniaux J.-C."/>
            <person name="Kalogeropoulos A."/>
            <person name="Katsoulou C."/>
            <person name="Kordes E."/>
            <person name="Lafuente M.J."/>
            <person name="Landt O."/>
            <person name="Louis E.J."/>
            <person name="Maarse A.C."/>
            <person name="Madania A."/>
            <person name="Mannhaupt G."/>
            <person name="Marck C."/>
            <person name="Martin R.P."/>
            <person name="Mewes H.-W."/>
            <person name="Michaux G."/>
            <person name="Paces V."/>
            <person name="Parle-McDermott A.G."/>
            <person name="Pearson B.M."/>
            <person name="Perrin A."/>
            <person name="Pettersson B."/>
            <person name="Poch O."/>
            <person name="Pohl T.M."/>
            <person name="Poirey R."/>
            <person name="Portetelle D."/>
            <person name="Pujol A."/>
            <person name="Purnelle B."/>
            <person name="Ramezani Rad M."/>
            <person name="Rechmann S."/>
            <person name="Schwager C."/>
            <person name="Schweizer M."/>
            <person name="Sor F."/>
            <person name="Sterky F."/>
            <person name="Tarassov I.A."/>
            <person name="Teodoru C."/>
            <person name="Tettelin H."/>
            <person name="Thierry A."/>
            <person name="Tobiasch E."/>
            <person name="Tzermia M."/>
            <person name="Uhlen M."/>
            <person name="Unseld M."/>
            <person name="Valens M."/>
            <person name="Vandenbol M."/>
            <person name="Vetter I."/>
            <person name="Vlcek C."/>
            <person name="Voet M."/>
            <person name="Volckaert G."/>
            <person name="Voss H."/>
            <person name="Wambutt R."/>
            <person name="Wedler H."/>
            <person name="Wiemann S."/>
            <person name="Winsor B."/>
            <person name="Wolfe K.H."/>
            <person name="Zollner A."/>
            <person name="Zumstein E."/>
            <person name="Kleine K."/>
        </authorList>
    </citation>
    <scope>NUCLEOTIDE SEQUENCE [LARGE SCALE GENOMIC DNA]</scope>
    <source>
        <strain>ATCC 204508 / S288c</strain>
    </source>
</reference>
<reference key="3">
    <citation type="journal article" date="2014" name="G3 (Bethesda)">
        <title>The reference genome sequence of Saccharomyces cerevisiae: Then and now.</title>
        <authorList>
            <person name="Engel S.R."/>
            <person name="Dietrich F.S."/>
            <person name="Fisk D.G."/>
            <person name="Binkley G."/>
            <person name="Balakrishnan R."/>
            <person name="Costanzo M.C."/>
            <person name="Dwight S.S."/>
            <person name="Hitz B.C."/>
            <person name="Karra K."/>
            <person name="Nash R.S."/>
            <person name="Weng S."/>
            <person name="Wong E.D."/>
            <person name="Lloyd P."/>
            <person name="Skrzypek M.S."/>
            <person name="Miyasato S.R."/>
            <person name="Simison M."/>
            <person name="Cherry J.M."/>
        </authorList>
    </citation>
    <scope>GENOME REANNOTATION</scope>
    <source>
        <strain>ATCC 204508 / S288c</strain>
    </source>
</reference>
<reference key="4">
    <citation type="journal article" date="2002" name="Nat. Biotechnol.">
        <title>An integrated approach for finding overlooked genes in yeast.</title>
        <authorList>
            <person name="Kumar A."/>
            <person name="Harrison P.M."/>
            <person name="Cheung K.-H."/>
            <person name="Lan N."/>
            <person name="Echols N."/>
            <person name="Bertone P."/>
            <person name="Miller P."/>
            <person name="Gerstein M.B."/>
            <person name="Snyder M."/>
        </authorList>
    </citation>
    <scope>NUCLEOTIDE SEQUENCE [GENOMIC DNA]</scope>
</reference>
<proteinExistence type="uncertain"/>
<evidence type="ECO:0000305" key="1"/>
<evidence type="ECO:0000305" key="2">
    <source>
    </source>
</evidence>
<name>YO61A_YEAST</name>